<evidence type="ECO:0000269" key="1">
    <source>
    </source>
</evidence>
<evidence type="ECO:0000269" key="2">
    <source>
    </source>
</evidence>
<evidence type="ECO:0000305" key="3"/>
<reference key="1">
    <citation type="journal article" date="1984" name="Biochem. Biophys. Res. Commun.">
        <title>Structures of two cockroach neuropeptides assigned by fast atom bombardment mass spectrometry.</title>
        <authorList>
            <person name="Witten J.L."/>
            <person name="Schaffer M.H."/>
            <person name="O'Shea M."/>
            <person name="Cook J.C."/>
            <person name="Hemling M.E."/>
            <person name="Rinehart K.L. Jr."/>
        </authorList>
    </citation>
    <scope>PROTEIN SEQUENCE</scope>
</reference>
<reference key="2">
    <citation type="journal article" date="1984" name="Proc. Natl. Acad. Sci. U.S.A.">
        <title>Isolation and primary structure of two peptides with cardioacceleratory and hyperglycemic activity from the corpora cardiaca of Periplaneta americana.</title>
        <authorList>
            <person name="Scarborough R.M."/>
            <person name="Jamieson G.C."/>
            <person name="Kalish F."/>
            <person name="Kramer S.J."/>
            <person name="McEnroe G.A."/>
            <person name="Miller C.A."/>
            <person name="Schooley D.A."/>
        </authorList>
    </citation>
    <scope>PROTEIN SEQUENCE</scope>
    <scope>FUNCTION</scope>
    <scope>SUBCELLULAR LOCATION</scope>
    <source>
        <tissue>Corpora cardiaca</tissue>
    </source>
</reference>
<reference key="3">
    <citation type="journal article" date="2009" name="BMC Evol. Biol.">
        <title>A proteomic approach for studying insect phylogeny: CAPA peptides of ancient insect taxa (Dictyoptera, Blattoptera) as a test case.</title>
        <authorList>
            <person name="Roth S."/>
            <person name="Fromm B."/>
            <person name="Gaede G."/>
            <person name="Predel R."/>
        </authorList>
    </citation>
    <scope>PROTEIN SEQUENCE</scope>
    <scope>PYROGLUTAMATE FORMATION AT GLN-1</scope>
    <scope>AMIDATION AT TRP-8</scope>
    <source>
        <tissue>Corpora cardiaca</tissue>
    </source>
</reference>
<organism>
    <name type="scientific">Periplaneta americana</name>
    <name type="common">American cockroach</name>
    <name type="synonym">Blatta americana</name>
    <dbReference type="NCBI Taxonomy" id="6978"/>
    <lineage>
        <taxon>Eukaryota</taxon>
        <taxon>Metazoa</taxon>
        <taxon>Ecdysozoa</taxon>
        <taxon>Arthropoda</taxon>
        <taxon>Hexapoda</taxon>
        <taxon>Insecta</taxon>
        <taxon>Pterygota</taxon>
        <taxon>Neoptera</taxon>
        <taxon>Polyneoptera</taxon>
        <taxon>Dictyoptera</taxon>
        <taxon>Blattodea</taxon>
        <taxon>Blattoidea</taxon>
        <taxon>Blattidae</taxon>
        <taxon>Blattinae</taxon>
        <taxon>Periplaneta</taxon>
    </lineage>
</organism>
<name>HTF1_PERAM</name>
<proteinExistence type="evidence at protein level"/>
<comment type="function">
    <text evidence="2">Hypertrehalosaemic factors are neuropeptides that elevate the level of trehalose in the hemolymph (trehalose is the major carbohydrate in the hemolymph of insects).</text>
</comment>
<comment type="subcellular location">
    <subcellularLocation>
        <location evidence="2">Secreted</location>
    </subcellularLocation>
</comment>
<comment type="similarity">
    <text evidence="3">Belongs to the AKH/HRTH/RPCH family.</text>
</comment>
<accession>P84259</accession>
<accession>P04548</accession>
<feature type="peptide" id="PRO_0000043437" description="Hypertrehalosaemic factor 1">
    <location>
        <begin position="1"/>
        <end position="8"/>
    </location>
</feature>
<feature type="modified residue" description="Pyrrolidone carboxylic acid" evidence="1">
    <location>
        <position position="1"/>
    </location>
</feature>
<feature type="modified residue" description="Tryptophan amide" evidence="1">
    <location>
        <position position="8"/>
    </location>
</feature>
<protein>
    <recommendedName>
        <fullName>Hypertrehalosaemic factor 1</fullName>
    </recommendedName>
    <alternativeName>
        <fullName>Adipokinetic hormone 1</fullName>
        <shortName>PerAm-AKH-1</shortName>
    </alternativeName>
    <alternativeName>
        <fullName>Hypertrehalosaemic factor I</fullName>
    </alternativeName>
    <alternativeName>
        <fullName>Neuropeptide M-I</fullName>
    </alternativeName>
    <alternativeName>
        <fullName>PeA-CAH-I</fullName>
    </alternativeName>
    <alternativeName>
        <fullName>Periplanetin CC-I</fullName>
    </alternativeName>
</protein>
<dbReference type="PIR" id="A05169">
    <property type="entry name" value="A05169"/>
</dbReference>
<dbReference type="PIR" id="A49823">
    <property type="entry name" value="A49823"/>
</dbReference>
<dbReference type="GO" id="GO:0005576">
    <property type="term" value="C:extracellular region"/>
    <property type="evidence" value="ECO:0007669"/>
    <property type="project" value="UniProtKB-SubCell"/>
</dbReference>
<dbReference type="GO" id="GO:0005179">
    <property type="term" value="F:hormone activity"/>
    <property type="evidence" value="ECO:0007669"/>
    <property type="project" value="UniProtKB-KW"/>
</dbReference>
<dbReference type="GO" id="GO:0007218">
    <property type="term" value="P:neuropeptide signaling pathway"/>
    <property type="evidence" value="ECO:0007669"/>
    <property type="project" value="UniProtKB-KW"/>
</dbReference>
<dbReference type="InterPro" id="IPR002047">
    <property type="entry name" value="Adipokinetic_hormone_CS"/>
</dbReference>
<dbReference type="PROSITE" id="PS00256">
    <property type="entry name" value="AKH"/>
    <property type="match status" value="1"/>
</dbReference>
<sequence>QVNFSPNW</sequence>
<keyword id="KW-0027">Amidation</keyword>
<keyword id="KW-0903">Direct protein sequencing</keyword>
<keyword id="KW-0372">Hormone</keyword>
<keyword id="KW-0527">Neuropeptide</keyword>
<keyword id="KW-0873">Pyrrolidone carboxylic acid</keyword>
<keyword id="KW-0964">Secreted</keyword>